<gene>
    <name evidence="1" type="primary">efp</name>
    <name type="ordered locus">LEPBI_II0201</name>
</gene>
<keyword id="KW-0963">Cytoplasm</keyword>
<keyword id="KW-0251">Elongation factor</keyword>
<keyword id="KW-0648">Protein biosynthesis</keyword>
<keyword id="KW-1185">Reference proteome</keyword>
<evidence type="ECO:0000255" key="1">
    <source>
        <dbReference type="HAMAP-Rule" id="MF_00141"/>
    </source>
</evidence>
<reference key="1">
    <citation type="journal article" date="2008" name="PLoS ONE">
        <title>Genome sequence of the saprophyte Leptospira biflexa provides insights into the evolution of Leptospira and the pathogenesis of leptospirosis.</title>
        <authorList>
            <person name="Picardeau M."/>
            <person name="Bulach D.M."/>
            <person name="Bouchier C."/>
            <person name="Zuerner R.L."/>
            <person name="Zidane N."/>
            <person name="Wilson P.J."/>
            <person name="Creno S."/>
            <person name="Kuczek E.S."/>
            <person name="Bommezzadri S."/>
            <person name="Davis J.C."/>
            <person name="McGrath A."/>
            <person name="Johnson M.J."/>
            <person name="Boursaux-Eude C."/>
            <person name="Seemann T."/>
            <person name="Rouy Z."/>
            <person name="Coppel R.L."/>
            <person name="Rood J.I."/>
            <person name="Lajus A."/>
            <person name="Davies J.K."/>
            <person name="Medigue C."/>
            <person name="Adler B."/>
        </authorList>
    </citation>
    <scope>NUCLEOTIDE SEQUENCE [LARGE SCALE GENOMIC DNA]</scope>
    <source>
        <strain>Patoc 1 / ATCC 23582 / Paris</strain>
    </source>
</reference>
<dbReference type="EMBL" id="CP000787">
    <property type="protein sequence ID" value="ABZ99734.1"/>
    <property type="molecule type" value="Genomic_DNA"/>
</dbReference>
<dbReference type="RefSeq" id="WP_012476671.1">
    <property type="nucleotide sequence ID" value="NC_010843.1"/>
</dbReference>
<dbReference type="SMR" id="B0SU50"/>
<dbReference type="STRING" id="456481.LEPBI_II0201"/>
<dbReference type="KEGG" id="lbi:LEPBI_II0201"/>
<dbReference type="HOGENOM" id="CLU_074944_0_1_12"/>
<dbReference type="OrthoDB" id="9801844at2"/>
<dbReference type="BioCyc" id="LBIF456481:LEPBI_RS18050-MONOMER"/>
<dbReference type="UniPathway" id="UPA00345"/>
<dbReference type="Proteomes" id="UP000001847">
    <property type="component" value="Chromosome II"/>
</dbReference>
<dbReference type="GO" id="GO:0005737">
    <property type="term" value="C:cytoplasm"/>
    <property type="evidence" value="ECO:0007669"/>
    <property type="project" value="UniProtKB-SubCell"/>
</dbReference>
<dbReference type="GO" id="GO:0003746">
    <property type="term" value="F:translation elongation factor activity"/>
    <property type="evidence" value="ECO:0007669"/>
    <property type="project" value="UniProtKB-UniRule"/>
</dbReference>
<dbReference type="GO" id="GO:0043043">
    <property type="term" value="P:peptide biosynthetic process"/>
    <property type="evidence" value="ECO:0007669"/>
    <property type="project" value="InterPro"/>
</dbReference>
<dbReference type="CDD" id="cd04470">
    <property type="entry name" value="S1_EF-P_repeat_1"/>
    <property type="match status" value="1"/>
</dbReference>
<dbReference type="CDD" id="cd05794">
    <property type="entry name" value="S1_EF-P_repeat_2"/>
    <property type="match status" value="1"/>
</dbReference>
<dbReference type="FunFam" id="2.30.30.30:FF:000003">
    <property type="entry name" value="Elongation factor P"/>
    <property type="match status" value="1"/>
</dbReference>
<dbReference type="FunFam" id="2.40.50.140:FF:000004">
    <property type="entry name" value="Elongation factor P"/>
    <property type="match status" value="1"/>
</dbReference>
<dbReference type="FunFam" id="2.40.50.140:FF:000009">
    <property type="entry name" value="Elongation factor P"/>
    <property type="match status" value="1"/>
</dbReference>
<dbReference type="Gene3D" id="2.30.30.30">
    <property type="match status" value="1"/>
</dbReference>
<dbReference type="Gene3D" id="2.40.50.140">
    <property type="entry name" value="Nucleic acid-binding proteins"/>
    <property type="match status" value="2"/>
</dbReference>
<dbReference type="HAMAP" id="MF_00141">
    <property type="entry name" value="EF_P"/>
    <property type="match status" value="1"/>
</dbReference>
<dbReference type="InterPro" id="IPR015365">
    <property type="entry name" value="Elong-fact-P_C"/>
</dbReference>
<dbReference type="InterPro" id="IPR012340">
    <property type="entry name" value="NA-bd_OB-fold"/>
</dbReference>
<dbReference type="InterPro" id="IPR014722">
    <property type="entry name" value="Rib_uL2_dom2"/>
</dbReference>
<dbReference type="InterPro" id="IPR020599">
    <property type="entry name" value="Transl_elong_fac_P/YeiP"/>
</dbReference>
<dbReference type="InterPro" id="IPR013185">
    <property type="entry name" value="Transl_elong_KOW-like"/>
</dbReference>
<dbReference type="InterPro" id="IPR001059">
    <property type="entry name" value="Transl_elong_P/YeiP_cen"/>
</dbReference>
<dbReference type="InterPro" id="IPR013852">
    <property type="entry name" value="Transl_elong_P/YeiP_CS"/>
</dbReference>
<dbReference type="InterPro" id="IPR011768">
    <property type="entry name" value="Transl_elongation_fac_P"/>
</dbReference>
<dbReference type="InterPro" id="IPR008991">
    <property type="entry name" value="Translation_prot_SH3-like_sf"/>
</dbReference>
<dbReference type="NCBIfam" id="TIGR00038">
    <property type="entry name" value="efp"/>
    <property type="match status" value="1"/>
</dbReference>
<dbReference type="NCBIfam" id="NF001810">
    <property type="entry name" value="PRK00529.1"/>
    <property type="match status" value="1"/>
</dbReference>
<dbReference type="PANTHER" id="PTHR30053">
    <property type="entry name" value="ELONGATION FACTOR P"/>
    <property type="match status" value="1"/>
</dbReference>
<dbReference type="PANTHER" id="PTHR30053:SF12">
    <property type="entry name" value="ELONGATION FACTOR P (EF-P) FAMILY PROTEIN"/>
    <property type="match status" value="1"/>
</dbReference>
<dbReference type="Pfam" id="PF01132">
    <property type="entry name" value="EFP"/>
    <property type="match status" value="1"/>
</dbReference>
<dbReference type="Pfam" id="PF08207">
    <property type="entry name" value="EFP_N"/>
    <property type="match status" value="1"/>
</dbReference>
<dbReference type="Pfam" id="PF09285">
    <property type="entry name" value="Elong-fact-P_C"/>
    <property type="match status" value="1"/>
</dbReference>
<dbReference type="PIRSF" id="PIRSF005901">
    <property type="entry name" value="EF-P"/>
    <property type="match status" value="1"/>
</dbReference>
<dbReference type="SMART" id="SM01185">
    <property type="entry name" value="EFP"/>
    <property type="match status" value="1"/>
</dbReference>
<dbReference type="SMART" id="SM00841">
    <property type="entry name" value="Elong-fact-P_C"/>
    <property type="match status" value="1"/>
</dbReference>
<dbReference type="SUPFAM" id="SSF50249">
    <property type="entry name" value="Nucleic acid-binding proteins"/>
    <property type="match status" value="2"/>
</dbReference>
<dbReference type="SUPFAM" id="SSF50104">
    <property type="entry name" value="Translation proteins SH3-like domain"/>
    <property type="match status" value="1"/>
</dbReference>
<dbReference type="PROSITE" id="PS01275">
    <property type="entry name" value="EFP"/>
    <property type="match status" value="1"/>
</dbReference>
<feature type="chain" id="PRO_1000096170" description="Elongation factor P">
    <location>
        <begin position="1"/>
        <end position="188"/>
    </location>
</feature>
<protein>
    <recommendedName>
        <fullName evidence="1">Elongation factor P</fullName>
        <shortName evidence="1">EF-P</shortName>
    </recommendedName>
</protein>
<accession>B0SU50</accession>
<proteinExistence type="inferred from homology"/>
<comment type="function">
    <text evidence="1">Involved in peptide bond synthesis. Stimulates efficient translation and peptide-bond synthesis on native or reconstituted 70S ribosomes in vitro. Probably functions indirectly by altering the affinity of the ribosome for aminoacyl-tRNA, thus increasing their reactivity as acceptors for peptidyl transferase.</text>
</comment>
<comment type="pathway">
    <text evidence="1">Protein biosynthesis; polypeptide chain elongation.</text>
</comment>
<comment type="subcellular location">
    <subcellularLocation>
        <location evidence="1">Cytoplasm</location>
    </subcellularLocation>
</comment>
<comment type="similarity">
    <text evidence="1">Belongs to the elongation factor P family.</text>
</comment>
<name>EFP_LEPBP</name>
<organism>
    <name type="scientific">Leptospira biflexa serovar Patoc (strain Patoc 1 / ATCC 23582 / Paris)</name>
    <dbReference type="NCBI Taxonomy" id="456481"/>
    <lineage>
        <taxon>Bacteria</taxon>
        <taxon>Pseudomonadati</taxon>
        <taxon>Spirochaetota</taxon>
        <taxon>Spirochaetia</taxon>
        <taxon>Leptospirales</taxon>
        <taxon>Leptospiraceae</taxon>
        <taxon>Leptospira</taxon>
    </lineage>
</organism>
<sequence>MNLGITEVKKGMILKIDNELYSVVKTEFVNPGKGSAFIRTKLKNIVRDSSIERTFKAAEKLESVDLERRKMQYCYADGDQIIFMDVNDYEQIPVSKDYVEDILPFMKEETPVEVAFYNDKPIGVTPPNFAILEVTYAEDGLKGDTTGLALKRVTVETGGEVQVPIFIKQGDTVKIDLRDLSYVERVNK</sequence>